<comment type="function">
    <text evidence="1">One of several proteins that assist in the late maturation steps of the functional core of the 30S ribosomal subunit. Helps release RbfA from mature subunits. May play a role in the assembly of ribosomal proteins into the subunit. Circularly permuted GTPase that catalyzes slow GTP hydrolysis, GTPase activity is stimulated by the 30S ribosomal subunit.</text>
</comment>
<comment type="cofactor">
    <cofactor evidence="1">
        <name>Zn(2+)</name>
        <dbReference type="ChEBI" id="CHEBI:29105"/>
    </cofactor>
    <text evidence="1">Binds 1 zinc ion per subunit.</text>
</comment>
<comment type="subunit">
    <text evidence="1">Monomer. Associates with 30S ribosomal subunit, binds 16S rRNA.</text>
</comment>
<comment type="subcellular location">
    <subcellularLocation>
        <location evidence="1">Cytoplasm</location>
    </subcellularLocation>
</comment>
<comment type="similarity">
    <text evidence="1">Belongs to the TRAFAC class YlqF/YawG GTPase family. RsgA subfamily.</text>
</comment>
<feature type="chain" id="PRO_0000171466" description="Small ribosomal subunit biogenesis GTPase RsgA 1">
    <location>
        <begin position="1"/>
        <end position="355"/>
    </location>
</feature>
<feature type="domain" description="CP-type G" evidence="2">
    <location>
        <begin position="103"/>
        <end position="262"/>
    </location>
</feature>
<feature type="binding site" evidence="1">
    <location>
        <begin position="152"/>
        <end position="155"/>
    </location>
    <ligand>
        <name>GTP</name>
        <dbReference type="ChEBI" id="CHEBI:37565"/>
    </ligand>
</feature>
<feature type="binding site" evidence="1">
    <location>
        <begin position="204"/>
        <end position="212"/>
    </location>
    <ligand>
        <name>GTP</name>
        <dbReference type="ChEBI" id="CHEBI:37565"/>
    </ligand>
</feature>
<feature type="binding site" evidence="1">
    <location>
        <position position="285"/>
    </location>
    <ligand>
        <name>Zn(2+)</name>
        <dbReference type="ChEBI" id="CHEBI:29105"/>
    </ligand>
</feature>
<feature type="binding site" evidence="1">
    <location>
        <position position="290"/>
    </location>
    <ligand>
        <name>Zn(2+)</name>
        <dbReference type="ChEBI" id="CHEBI:29105"/>
    </ligand>
</feature>
<feature type="binding site" evidence="1">
    <location>
        <position position="292"/>
    </location>
    <ligand>
        <name>Zn(2+)</name>
        <dbReference type="ChEBI" id="CHEBI:29105"/>
    </ligand>
</feature>
<feature type="binding site" evidence="1">
    <location>
        <position position="298"/>
    </location>
    <ligand>
        <name>Zn(2+)</name>
        <dbReference type="ChEBI" id="CHEBI:29105"/>
    </ligand>
</feature>
<accession>Q8A8H7</accession>
<evidence type="ECO:0000255" key="1">
    <source>
        <dbReference type="HAMAP-Rule" id="MF_01820"/>
    </source>
</evidence>
<evidence type="ECO:0000255" key="2">
    <source>
        <dbReference type="PROSITE-ProRule" id="PRU01058"/>
    </source>
</evidence>
<dbReference type="EC" id="3.6.1.-" evidence="1"/>
<dbReference type="EMBL" id="AE015928">
    <property type="protein sequence ID" value="AAO76297.1"/>
    <property type="molecule type" value="Genomic_DNA"/>
</dbReference>
<dbReference type="RefSeq" id="NP_810103.1">
    <property type="nucleotide sequence ID" value="NC_004663.1"/>
</dbReference>
<dbReference type="RefSeq" id="WP_011107648.1">
    <property type="nucleotide sequence ID" value="NC_004663.1"/>
</dbReference>
<dbReference type="SMR" id="Q8A8H7"/>
<dbReference type="STRING" id="226186.BT_1190"/>
<dbReference type="PaxDb" id="226186-BT_1190"/>
<dbReference type="EnsemblBacteria" id="AAO76297">
    <property type="protein sequence ID" value="AAO76297"/>
    <property type="gene ID" value="BT_1190"/>
</dbReference>
<dbReference type="GeneID" id="60927168"/>
<dbReference type="KEGG" id="bth:BT_1190"/>
<dbReference type="PATRIC" id="fig|226186.12.peg.1213"/>
<dbReference type="eggNOG" id="COG1162">
    <property type="taxonomic scope" value="Bacteria"/>
</dbReference>
<dbReference type="HOGENOM" id="CLU_033617_0_1_10"/>
<dbReference type="InParanoid" id="Q8A8H7"/>
<dbReference type="OrthoDB" id="9809485at2"/>
<dbReference type="Proteomes" id="UP000001414">
    <property type="component" value="Chromosome"/>
</dbReference>
<dbReference type="GO" id="GO:0005737">
    <property type="term" value="C:cytoplasm"/>
    <property type="evidence" value="ECO:0007669"/>
    <property type="project" value="UniProtKB-SubCell"/>
</dbReference>
<dbReference type="GO" id="GO:0005525">
    <property type="term" value="F:GTP binding"/>
    <property type="evidence" value="ECO:0007669"/>
    <property type="project" value="UniProtKB-UniRule"/>
</dbReference>
<dbReference type="GO" id="GO:0003924">
    <property type="term" value="F:GTPase activity"/>
    <property type="evidence" value="ECO:0007669"/>
    <property type="project" value="UniProtKB-UniRule"/>
</dbReference>
<dbReference type="GO" id="GO:0046872">
    <property type="term" value="F:metal ion binding"/>
    <property type="evidence" value="ECO:0007669"/>
    <property type="project" value="UniProtKB-KW"/>
</dbReference>
<dbReference type="GO" id="GO:0019843">
    <property type="term" value="F:rRNA binding"/>
    <property type="evidence" value="ECO:0007669"/>
    <property type="project" value="UniProtKB-KW"/>
</dbReference>
<dbReference type="GO" id="GO:0042274">
    <property type="term" value="P:ribosomal small subunit biogenesis"/>
    <property type="evidence" value="ECO:0007669"/>
    <property type="project" value="UniProtKB-UniRule"/>
</dbReference>
<dbReference type="CDD" id="cd01854">
    <property type="entry name" value="YjeQ_EngC"/>
    <property type="match status" value="1"/>
</dbReference>
<dbReference type="Gene3D" id="2.40.50.140">
    <property type="entry name" value="Nucleic acid-binding proteins"/>
    <property type="match status" value="1"/>
</dbReference>
<dbReference type="Gene3D" id="3.40.50.300">
    <property type="entry name" value="P-loop containing nucleotide triphosphate hydrolases"/>
    <property type="match status" value="1"/>
</dbReference>
<dbReference type="Gene3D" id="1.10.40.50">
    <property type="entry name" value="Probable gtpase engc, domain 3"/>
    <property type="match status" value="1"/>
</dbReference>
<dbReference type="HAMAP" id="MF_01820">
    <property type="entry name" value="GTPase_RsgA"/>
    <property type="match status" value="1"/>
</dbReference>
<dbReference type="InterPro" id="IPR030378">
    <property type="entry name" value="G_CP_dom"/>
</dbReference>
<dbReference type="InterPro" id="IPR012340">
    <property type="entry name" value="NA-bd_OB-fold"/>
</dbReference>
<dbReference type="InterPro" id="IPR027417">
    <property type="entry name" value="P-loop_NTPase"/>
</dbReference>
<dbReference type="InterPro" id="IPR004881">
    <property type="entry name" value="Ribosome_biogen_GTPase_RsgA"/>
</dbReference>
<dbReference type="InterPro" id="IPR010914">
    <property type="entry name" value="RsgA_GTPase_dom"/>
</dbReference>
<dbReference type="NCBIfam" id="TIGR00157">
    <property type="entry name" value="ribosome small subunit-dependent GTPase A"/>
    <property type="match status" value="1"/>
</dbReference>
<dbReference type="PANTHER" id="PTHR32120">
    <property type="entry name" value="SMALL RIBOSOMAL SUBUNIT BIOGENESIS GTPASE RSGA"/>
    <property type="match status" value="1"/>
</dbReference>
<dbReference type="PANTHER" id="PTHR32120:SF10">
    <property type="entry name" value="SMALL RIBOSOMAL SUBUNIT BIOGENESIS GTPASE RSGA"/>
    <property type="match status" value="1"/>
</dbReference>
<dbReference type="Pfam" id="PF03193">
    <property type="entry name" value="RsgA_GTPase"/>
    <property type="match status" value="1"/>
</dbReference>
<dbReference type="SUPFAM" id="SSF50249">
    <property type="entry name" value="Nucleic acid-binding proteins"/>
    <property type="match status" value="1"/>
</dbReference>
<dbReference type="SUPFAM" id="SSF52540">
    <property type="entry name" value="P-loop containing nucleoside triphosphate hydrolases"/>
    <property type="match status" value="1"/>
</dbReference>
<dbReference type="PROSITE" id="PS50936">
    <property type="entry name" value="ENGC_GTPASE"/>
    <property type="match status" value="1"/>
</dbReference>
<dbReference type="PROSITE" id="PS51721">
    <property type="entry name" value="G_CP"/>
    <property type="match status" value="1"/>
</dbReference>
<reference key="1">
    <citation type="journal article" date="2003" name="Science">
        <title>A genomic view of the human-Bacteroides thetaiotaomicron symbiosis.</title>
        <authorList>
            <person name="Xu J."/>
            <person name="Bjursell M.K."/>
            <person name="Himrod J."/>
            <person name="Deng S."/>
            <person name="Carmichael L.K."/>
            <person name="Chiang H.C."/>
            <person name="Hooper L.V."/>
            <person name="Gordon J.I."/>
        </authorList>
    </citation>
    <scope>NUCLEOTIDE SEQUENCE [LARGE SCALE GENOMIC DNA]</scope>
    <source>
        <strain>ATCC 29148 / DSM 2079 / JCM 5827 / CCUG 10774 / NCTC 10582 / VPI-5482 / E50</strain>
    </source>
</reference>
<protein>
    <recommendedName>
        <fullName evidence="1">Small ribosomal subunit biogenesis GTPase RsgA 1</fullName>
        <ecNumber evidence="1">3.6.1.-</ecNumber>
    </recommendedName>
</protein>
<name>RSGA1_BACTN</name>
<organism>
    <name type="scientific">Bacteroides thetaiotaomicron (strain ATCC 29148 / DSM 2079 / JCM 5827 / CCUG 10774 / NCTC 10582 / VPI-5482 / E50)</name>
    <dbReference type="NCBI Taxonomy" id="226186"/>
    <lineage>
        <taxon>Bacteria</taxon>
        <taxon>Pseudomonadati</taxon>
        <taxon>Bacteroidota</taxon>
        <taxon>Bacteroidia</taxon>
        <taxon>Bacteroidales</taxon>
        <taxon>Bacteroidaceae</taxon>
        <taxon>Bacteroides</taxon>
    </lineage>
</organism>
<keyword id="KW-0963">Cytoplasm</keyword>
<keyword id="KW-0342">GTP-binding</keyword>
<keyword id="KW-0378">Hydrolase</keyword>
<keyword id="KW-0479">Metal-binding</keyword>
<keyword id="KW-0547">Nucleotide-binding</keyword>
<keyword id="KW-1185">Reference proteome</keyword>
<keyword id="KW-0690">Ribosome biogenesis</keyword>
<keyword id="KW-0694">RNA-binding</keyword>
<keyword id="KW-0699">rRNA-binding</keyword>
<keyword id="KW-0862">Zinc</keyword>
<proteinExistence type="inferred from homology"/>
<gene>
    <name evidence="1" type="primary">rsgA1</name>
    <name type="ordered locus">BT_1190</name>
</gene>
<sequence>MSNENNNLSLYGWSDNLFRQKQISQYKDMSHGRIIVTHKTCYEVVAEDGVYLCELTGNMIYGRVPDEYPCTGDWVIFQPFDANKGIIVDILPRERALYRKKNGRVADRQAIASYVDKAFIVQSLDDNFNVRRAERFIAQVMEEKIKPVLVLNKADLGCDRQKIDEAIKHIARQFPVFITSIRQPQTILRLRESITKGETVVFVGSSGVGKSSLVNALCGKSVLNTSDISLSTGKGRHTSTRREMVLMDGSGVLIDTPGVREFGLAIDNPDSLTEMFEISDYAESCRFSDCKHIDEPGCAVLEAVHNGTLDHKVYESYLKLRREAWHFSASEHEKRKKEKSFTKLVEEVKKRKANF</sequence>